<sequence>MTQLNIAPTPADTAAANNNANAAAGAKQVARWRVADIVALYELPFNDLMFKAQQTHREHFDANTVQLSTLLSIKTGGCEEDCAYCPQSVHHDTGLQADKLMPVDEVLAAAKVAKENGATRFCMGAAWRNPKDRHLEPIKDMIRGVKAMGLETCVTLGMLETHQAQGLREAGLDYYNHNLDTSPEFYGQIISTRTYQDRLDTLERVRDAGINVCCGGIVGLGESRRERAGLIAQLANMEPYPESVPINNLVQVEGTPLTGTEAIDPFEFVRTIAIARITMPRAMVRLSAGREQMDEALQALCFLAGANSIFYGDQLLTTSNPQAEADRKLLERLGIRAEAAQQMPLDQSGCEHSCDKHAAPN</sequence>
<reference key="1">
    <citation type="journal article" date="2011" name="J. Bacteriol.">
        <title>Complete genome sequence of the plant growth-promoting endophyte Burkholderia phytofirmans strain PsJN.</title>
        <authorList>
            <person name="Weilharter A."/>
            <person name="Mitter B."/>
            <person name="Shin M.V."/>
            <person name="Chain P.S."/>
            <person name="Nowak J."/>
            <person name="Sessitsch A."/>
        </authorList>
    </citation>
    <scope>NUCLEOTIDE SEQUENCE [LARGE SCALE GENOMIC DNA]</scope>
    <source>
        <strain>DSM 17436 / LMG 22146 / PsJN</strain>
    </source>
</reference>
<keyword id="KW-0001">2Fe-2S</keyword>
<keyword id="KW-0004">4Fe-4S</keyword>
<keyword id="KW-0093">Biotin biosynthesis</keyword>
<keyword id="KW-0408">Iron</keyword>
<keyword id="KW-0411">Iron-sulfur</keyword>
<keyword id="KW-0479">Metal-binding</keyword>
<keyword id="KW-0949">S-adenosyl-L-methionine</keyword>
<keyword id="KW-0808">Transferase</keyword>
<dbReference type="EC" id="2.8.1.6" evidence="1"/>
<dbReference type="EMBL" id="CP001052">
    <property type="protein sequence ID" value="ACD14869.1"/>
    <property type="molecule type" value="Genomic_DNA"/>
</dbReference>
<dbReference type="RefSeq" id="WP_012431512.1">
    <property type="nucleotide sequence ID" value="NC_010681.1"/>
</dbReference>
<dbReference type="SMR" id="B2SWS5"/>
<dbReference type="STRING" id="398527.Bphyt_0444"/>
<dbReference type="KEGG" id="bpy:Bphyt_0444"/>
<dbReference type="eggNOG" id="COG0502">
    <property type="taxonomic scope" value="Bacteria"/>
</dbReference>
<dbReference type="HOGENOM" id="CLU_033172_1_2_4"/>
<dbReference type="OrthoDB" id="9786826at2"/>
<dbReference type="UniPathway" id="UPA00078">
    <property type="reaction ID" value="UER00162"/>
</dbReference>
<dbReference type="Proteomes" id="UP000001739">
    <property type="component" value="Chromosome 1"/>
</dbReference>
<dbReference type="GO" id="GO:0051537">
    <property type="term" value="F:2 iron, 2 sulfur cluster binding"/>
    <property type="evidence" value="ECO:0007669"/>
    <property type="project" value="UniProtKB-KW"/>
</dbReference>
<dbReference type="GO" id="GO:0051539">
    <property type="term" value="F:4 iron, 4 sulfur cluster binding"/>
    <property type="evidence" value="ECO:0007669"/>
    <property type="project" value="UniProtKB-KW"/>
</dbReference>
<dbReference type="GO" id="GO:0004076">
    <property type="term" value="F:biotin synthase activity"/>
    <property type="evidence" value="ECO:0007669"/>
    <property type="project" value="UniProtKB-UniRule"/>
</dbReference>
<dbReference type="GO" id="GO:0005506">
    <property type="term" value="F:iron ion binding"/>
    <property type="evidence" value="ECO:0007669"/>
    <property type="project" value="UniProtKB-UniRule"/>
</dbReference>
<dbReference type="GO" id="GO:0009102">
    <property type="term" value="P:biotin biosynthetic process"/>
    <property type="evidence" value="ECO:0007669"/>
    <property type="project" value="UniProtKB-UniRule"/>
</dbReference>
<dbReference type="CDD" id="cd01335">
    <property type="entry name" value="Radical_SAM"/>
    <property type="match status" value="1"/>
</dbReference>
<dbReference type="FunFam" id="3.20.20.70:FF:000011">
    <property type="entry name" value="Biotin synthase"/>
    <property type="match status" value="1"/>
</dbReference>
<dbReference type="Gene3D" id="3.20.20.70">
    <property type="entry name" value="Aldolase class I"/>
    <property type="match status" value="1"/>
</dbReference>
<dbReference type="HAMAP" id="MF_01694">
    <property type="entry name" value="BioB"/>
    <property type="match status" value="1"/>
</dbReference>
<dbReference type="InterPro" id="IPR013785">
    <property type="entry name" value="Aldolase_TIM"/>
</dbReference>
<dbReference type="InterPro" id="IPR010722">
    <property type="entry name" value="BATS_dom"/>
</dbReference>
<dbReference type="InterPro" id="IPR002684">
    <property type="entry name" value="Biotin_synth/BioAB"/>
</dbReference>
<dbReference type="InterPro" id="IPR024177">
    <property type="entry name" value="Biotin_synthase"/>
</dbReference>
<dbReference type="InterPro" id="IPR006638">
    <property type="entry name" value="Elp3/MiaA/NifB-like_rSAM"/>
</dbReference>
<dbReference type="InterPro" id="IPR007197">
    <property type="entry name" value="rSAM"/>
</dbReference>
<dbReference type="NCBIfam" id="TIGR00433">
    <property type="entry name" value="bioB"/>
    <property type="match status" value="1"/>
</dbReference>
<dbReference type="PANTHER" id="PTHR22976">
    <property type="entry name" value="BIOTIN SYNTHASE"/>
    <property type="match status" value="1"/>
</dbReference>
<dbReference type="PANTHER" id="PTHR22976:SF2">
    <property type="entry name" value="BIOTIN SYNTHASE, MITOCHONDRIAL"/>
    <property type="match status" value="1"/>
</dbReference>
<dbReference type="Pfam" id="PF06968">
    <property type="entry name" value="BATS"/>
    <property type="match status" value="1"/>
</dbReference>
<dbReference type="Pfam" id="PF04055">
    <property type="entry name" value="Radical_SAM"/>
    <property type="match status" value="1"/>
</dbReference>
<dbReference type="PIRSF" id="PIRSF001619">
    <property type="entry name" value="Biotin_synth"/>
    <property type="match status" value="1"/>
</dbReference>
<dbReference type="SFLD" id="SFLDF00272">
    <property type="entry name" value="biotin_synthase"/>
    <property type="match status" value="1"/>
</dbReference>
<dbReference type="SFLD" id="SFLDG01278">
    <property type="entry name" value="biotin_synthase_like"/>
    <property type="match status" value="1"/>
</dbReference>
<dbReference type="SMART" id="SM00876">
    <property type="entry name" value="BATS"/>
    <property type="match status" value="1"/>
</dbReference>
<dbReference type="SMART" id="SM00729">
    <property type="entry name" value="Elp3"/>
    <property type="match status" value="1"/>
</dbReference>
<dbReference type="SUPFAM" id="SSF102114">
    <property type="entry name" value="Radical SAM enzymes"/>
    <property type="match status" value="1"/>
</dbReference>
<dbReference type="PROSITE" id="PS51918">
    <property type="entry name" value="RADICAL_SAM"/>
    <property type="match status" value="1"/>
</dbReference>
<comment type="function">
    <text evidence="1">Catalyzes the conversion of dethiobiotin (DTB) to biotin by the insertion of a sulfur atom into dethiobiotin via a radical-based mechanism.</text>
</comment>
<comment type="catalytic activity">
    <reaction evidence="1">
        <text>(4R,5S)-dethiobiotin + (sulfur carrier)-SH + 2 reduced [2Fe-2S]-[ferredoxin] + 2 S-adenosyl-L-methionine = (sulfur carrier)-H + biotin + 2 5'-deoxyadenosine + 2 L-methionine + 2 oxidized [2Fe-2S]-[ferredoxin]</text>
        <dbReference type="Rhea" id="RHEA:22060"/>
        <dbReference type="Rhea" id="RHEA-COMP:10000"/>
        <dbReference type="Rhea" id="RHEA-COMP:10001"/>
        <dbReference type="Rhea" id="RHEA-COMP:14737"/>
        <dbReference type="Rhea" id="RHEA-COMP:14739"/>
        <dbReference type="ChEBI" id="CHEBI:17319"/>
        <dbReference type="ChEBI" id="CHEBI:29917"/>
        <dbReference type="ChEBI" id="CHEBI:33737"/>
        <dbReference type="ChEBI" id="CHEBI:33738"/>
        <dbReference type="ChEBI" id="CHEBI:57586"/>
        <dbReference type="ChEBI" id="CHEBI:57844"/>
        <dbReference type="ChEBI" id="CHEBI:59789"/>
        <dbReference type="ChEBI" id="CHEBI:64428"/>
        <dbReference type="ChEBI" id="CHEBI:149473"/>
        <dbReference type="EC" id="2.8.1.6"/>
    </reaction>
</comment>
<comment type="cofactor">
    <cofactor evidence="1">
        <name>[4Fe-4S] cluster</name>
        <dbReference type="ChEBI" id="CHEBI:49883"/>
    </cofactor>
    <text evidence="1">Binds 1 [4Fe-4S] cluster. The cluster is coordinated with 3 cysteines and an exchangeable S-adenosyl-L-methionine.</text>
</comment>
<comment type="cofactor">
    <cofactor evidence="1">
        <name>[2Fe-2S] cluster</name>
        <dbReference type="ChEBI" id="CHEBI:190135"/>
    </cofactor>
    <text evidence="1">Binds 1 [2Fe-2S] cluster. The cluster is coordinated with 3 cysteines and 1 arginine.</text>
</comment>
<comment type="pathway">
    <text evidence="1">Cofactor biosynthesis; biotin biosynthesis; biotin from 7,8-diaminononanoate: step 2/2.</text>
</comment>
<comment type="subunit">
    <text evidence="1">Homodimer.</text>
</comment>
<comment type="similarity">
    <text evidence="1">Belongs to the radical SAM superfamily. Biotin synthase family.</text>
</comment>
<protein>
    <recommendedName>
        <fullName evidence="1">Biotin synthase</fullName>
        <ecNumber evidence="1">2.8.1.6</ecNumber>
    </recommendedName>
</protein>
<name>BIOB_PARPJ</name>
<accession>B2SWS5</accession>
<feature type="chain" id="PRO_0000381273" description="Biotin synthase">
    <location>
        <begin position="1"/>
        <end position="361"/>
    </location>
</feature>
<feature type="domain" description="Radical SAM core" evidence="2">
    <location>
        <begin position="63"/>
        <end position="290"/>
    </location>
</feature>
<feature type="binding site" evidence="1">
    <location>
        <position position="78"/>
    </location>
    <ligand>
        <name>[4Fe-4S] cluster</name>
        <dbReference type="ChEBI" id="CHEBI:49883"/>
        <note>4Fe-4S-S-AdoMet</note>
    </ligand>
</feature>
<feature type="binding site" evidence="1">
    <location>
        <position position="82"/>
    </location>
    <ligand>
        <name>[4Fe-4S] cluster</name>
        <dbReference type="ChEBI" id="CHEBI:49883"/>
        <note>4Fe-4S-S-AdoMet</note>
    </ligand>
</feature>
<feature type="binding site" evidence="1">
    <location>
        <position position="85"/>
    </location>
    <ligand>
        <name>[4Fe-4S] cluster</name>
        <dbReference type="ChEBI" id="CHEBI:49883"/>
        <note>4Fe-4S-S-AdoMet</note>
    </ligand>
</feature>
<feature type="binding site" evidence="1">
    <location>
        <position position="122"/>
    </location>
    <ligand>
        <name>[2Fe-2S] cluster</name>
        <dbReference type="ChEBI" id="CHEBI:190135"/>
    </ligand>
</feature>
<feature type="binding site" evidence="1">
    <location>
        <position position="153"/>
    </location>
    <ligand>
        <name>[2Fe-2S] cluster</name>
        <dbReference type="ChEBI" id="CHEBI:190135"/>
    </ligand>
</feature>
<feature type="binding site" evidence="1">
    <location>
        <position position="213"/>
    </location>
    <ligand>
        <name>[2Fe-2S] cluster</name>
        <dbReference type="ChEBI" id="CHEBI:190135"/>
    </ligand>
</feature>
<feature type="binding site" evidence="1">
    <location>
        <position position="285"/>
    </location>
    <ligand>
        <name>[2Fe-2S] cluster</name>
        <dbReference type="ChEBI" id="CHEBI:190135"/>
    </ligand>
</feature>
<organism>
    <name type="scientific">Paraburkholderia phytofirmans (strain DSM 17436 / LMG 22146 / PsJN)</name>
    <name type="common">Burkholderia phytofirmans</name>
    <dbReference type="NCBI Taxonomy" id="398527"/>
    <lineage>
        <taxon>Bacteria</taxon>
        <taxon>Pseudomonadati</taxon>
        <taxon>Pseudomonadota</taxon>
        <taxon>Betaproteobacteria</taxon>
        <taxon>Burkholderiales</taxon>
        <taxon>Burkholderiaceae</taxon>
        <taxon>Paraburkholderia</taxon>
    </lineage>
</organism>
<gene>
    <name evidence="1" type="primary">bioB</name>
    <name type="ordered locus">Bphyt_0444</name>
</gene>
<proteinExistence type="inferred from homology"/>
<evidence type="ECO:0000255" key="1">
    <source>
        <dbReference type="HAMAP-Rule" id="MF_01694"/>
    </source>
</evidence>
<evidence type="ECO:0000255" key="2">
    <source>
        <dbReference type="PROSITE-ProRule" id="PRU01266"/>
    </source>
</evidence>